<organism>
    <name type="scientific">Ovis aries</name>
    <name type="common">Sheep</name>
    <dbReference type="NCBI Taxonomy" id="9940"/>
    <lineage>
        <taxon>Eukaryota</taxon>
        <taxon>Metazoa</taxon>
        <taxon>Chordata</taxon>
        <taxon>Craniata</taxon>
        <taxon>Vertebrata</taxon>
        <taxon>Euteleostomi</taxon>
        <taxon>Mammalia</taxon>
        <taxon>Eutheria</taxon>
        <taxon>Laurasiatheria</taxon>
        <taxon>Artiodactyla</taxon>
        <taxon>Ruminantia</taxon>
        <taxon>Pecora</taxon>
        <taxon>Bovidae</taxon>
        <taxon>Caprinae</taxon>
        <taxon>Ovis</taxon>
    </lineage>
</organism>
<dbReference type="EMBL" id="U61980">
    <property type="protein sequence ID" value="AAB04756.1"/>
    <property type="molecule type" value="mRNA"/>
</dbReference>
<dbReference type="BMRB" id="Q28601"/>
<dbReference type="SMR" id="Q28601"/>
<dbReference type="STRING" id="9940.ENSOARP00000017523"/>
<dbReference type="PaxDb" id="9940-ENSOARP00000017523"/>
<dbReference type="eggNOG" id="KOG0487">
    <property type="taxonomic scope" value="Eukaryota"/>
</dbReference>
<dbReference type="Proteomes" id="UP000002356">
    <property type="component" value="Unplaced"/>
</dbReference>
<dbReference type="GO" id="GO:0005634">
    <property type="term" value="C:nucleus"/>
    <property type="evidence" value="ECO:0007669"/>
    <property type="project" value="UniProtKB-SubCell"/>
</dbReference>
<dbReference type="GO" id="GO:0000981">
    <property type="term" value="F:DNA-binding transcription factor activity, RNA polymerase II-specific"/>
    <property type="evidence" value="ECO:0007669"/>
    <property type="project" value="InterPro"/>
</dbReference>
<dbReference type="GO" id="GO:0000978">
    <property type="term" value="F:RNA polymerase II cis-regulatory region sequence-specific DNA binding"/>
    <property type="evidence" value="ECO:0007669"/>
    <property type="project" value="TreeGrafter"/>
</dbReference>
<dbReference type="GO" id="GO:0009952">
    <property type="term" value="P:anterior/posterior pattern specification"/>
    <property type="evidence" value="ECO:0007669"/>
    <property type="project" value="TreeGrafter"/>
</dbReference>
<dbReference type="GO" id="GO:0048704">
    <property type="term" value="P:embryonic skeletal system morphogenesis"/>
    <property type="evidence" value="ECO:0007669"/>
    <property type="project" value="TreeGrafter"/>
</dbReference>
<dbReference type="GO" id="GO:0009954">
    <property type="term" value="P:proximal/distal pattern formation"/>
    <property type="evidence" value="ECO:0007669"/>
    <property type="project" value="TreeGrafter"/>
</dbReference>
<dbReference type="CDD" id="cd00086">
    <property type="entry name" value="homeodomain"/>
    <property type="match status" value="1"/>
</dbReference>
<dbReference type="FunFam" id="1.10.10.60:FF:000018">
    <property type="entry name" value="Homeobox A10"/>
    <property type="match status" value="1"/>
</dbReference>
<dbReference type="Gene3D" id="1.10.10.60">
    <property type="entry name" value="Homeodomain-like"/>
    <property type="match status" value="1"/>
</dbReference>
<dbReference type="InterPro" id="IPR050803">
    <property type="entry name" value="Abd-B_homeobox_TF"/>
</dbReference>
<dbReference type="InterPro" id="IPR001356">
    <property type="entry name" value="HD"/>
</dbReference>
<dbReference type="InterPro" id="IPR020479">
    <property type="entry name" value="HD_metazoa"/>
</dbReference>
<dbReference type="InterPro" id="IPR017970">
    <property type="entry name" value="Homeobox_CS"/>
</dbReference>
<dbReference type="InterPro" id="IPR009057">
    <property type="entry name" value="Homeodomain-like_sf"/>
</dbReference>
<dbReference type="PANTHER" id="PTHR45970">
    <property type="entry name" value="AGAP004664-PA"/>
    <property type="match status" value="1"/>
</dbReference>
<dbReference type="PANTHER" id="PTHR45970:SF1">
    <property type="entry name" value="HOMEOBOX PROTEIN HOX-C9"/>
    <property type="match status" value="1"/>
</dbReference>
<dbReference type="Pfam" id="PF00046">
    <property type="entry name" value="Homeodomain"/>
    <property type="match status" value="1"/>
</dbReference>
<dbReference type="PRINTS" id="PR00024">
    <property type="entry name" value="HOMEOBOX"/>
</dbReference>
<dbReference type="SMART" id="SM00389">
    <property type="entry name" value="HOX"/>
    <property type="match status" value="1"/>
</dbReference>
<dbReference type="SUPFAM" id="SSF46689">
    <property type="entry name" value="Homeodomain-like"/>
    <property type="match status" value="1"/>
</dbReference>
<dbReference type="PROSITE" id="PS00027">
    <property type="entry name" value="HOMEOBOX_1"/>
    <property type="match status" value="1"/>
</dbReference>
<dbReference type="PROSITE" id="PS50071">
    <property type="entry name" value="HOMEOBOX_2"/>
    <property type="match status" value="1"/>
</dbReference>
<comment type="function">
    <text>Sequence-specific transcription factor which is part of a developmental regulatory system that provides cells with specific positional identities on the anterior-posterior axis.</text>
</comment>
<comment type="subunit">
    <text evidence="1">Interacts with Geminin/GMNN, which inhibits transcriptional activity.</text>
</comment>
<comment type="subcellular location">
    <subcellularLocation>
        <location>Nucleus</location>
    </subcellularLocation>
</comment>
<comment type="similarity">
    <text evidence="3">Belongs to the Abd-B homeobox family.</text>
</comment>
<protein>
    <recommendedName>
        <fullName>Homeobox protein Hox-C9</fullName>
    </recommendedName>
</protein>
<gene>
    <name type="primary">HOXC9</name>
    <name type="synonym">HOXC-9</name>
</gene>
<proteinExistence type="evidence at transcript level"/>
<reference key="1">
    <citation type="submission" date="1996-06" db="EMBL/GenBank/DDBJ databases">
        <authorList>
            <person name="Roche P.J."/>
        </authorList>
    </citation>
    <scope>NUCLEOTIDE SEQUENCE [MRNA]</scope>
</reference>
<name>HXC9_SHEEP</name>
<feature type="chain" id="PRO_0000200186" description="Homeobox protein Hox-C9">
    <location>
        <begin position="1" status="less than"/>
        <end position="96"/>
    </location>
</feature>
<feature type="DNA-binding region" description="Homeobox" evidence="2">
    <location>
        <begin position="28"/>
        <end position="87"/>
    </location>
</feature>
<feature type="non-terminal residue">
    <location>
        <position position="1"/>
    </location>
</feature>
<sequence>LAGSKHKEEKADLDPSNPVANWIHARSTRKKRCPYTKYQTLELEKEFLFNMYLTRDRRYEVARVLNLTERQVKIWFQNRRMKMKKMNKEKTDKEQS</sequence>
<keyword id="KW-0217">Developmental protein</keyword>
<keyword id="KW-0238">DNA-binding</keyword>
<keyword id="KW-0371">Homeobox</keyword>
<keyword id="KW-0539">Nucleus</keyword>
<keyword id="KW-1185">Reference proteome</keyword>
<keyword id="KW-0804">Transcription</keyword>
<keyword id="KW-0805">Transcription regulation</keyword>
<accession>Q28601</accession>
<evidence type="ECO:0000250" key="1"/>
<evidence type="ECO:0000255" key="2">
    <source>
        <dbReference type="PROSITE-ProRule" id="PRU00108"/>
    </source>
</evidence>
<evidence type="ECO:0000305" key="3"/>